<feature type="signal peptide" evidence="1">
    <location>
        <begin position="1"/>
        <end position="20"/>
    </location>
</feature>
<feature type="chain" id="PRO_0000244760" description="LHFPL tetraspan subfamily member 1 protein">
    <location>
        <begin position="21"/>
        <end position="220"/>
    </location>
</feature>
<feature type="transmembrane region" description="Helical" evidence="1">
    <location>
        <begin position="86"/>
        <end position="106"/>
    </location>
</feature>
<feature type="transmembrane region" description="Helical" evidence="1">
    <location>
        <begin position="122"/>
        <end position="142"/>
    </location>
</feature>
<feature type="transmembrane region" description="Helical" evidence="1">
    <location>
        <begin position="165"/>
        <end position="185"/>
    </location>
</feature>
<feature type="glycosylation site" description="N-linked (GlcNAc...) asparagine" evidence="1">
    <location>
        <position position="153"/>
    </location>
</feature>
<feature type="splice variant" id="VSP_019616" description="In isoform 3." evidence="3">
    <location>
        <begin position="1"/>
        <end position="179"/>
    </location>
</feature>
<feature type="splice variant" id="VSP_019617" description="In isoform 2." evidence="3">
    <location>
        <begin position="129"/>
        <end position="161"/>
    </location>
</feature>
<comment type="interaction">
    <interactant intactId="EBI-18268016">
        <id>Q86WI0</id>
    </interactant>
    <interactant intactId="EBI-720480">
        <id>P24593</id>
        <label>IGFBP5</label>
    </interactant>
    <organismsDiffer>false</organismsDiffer>
    <experiments>3</experiments>
</comment>
<comment type="interaction">
    <interactant intactId="EBI-18268016">
        <id>Q86WI0</id>
    </interactant>
    <interactant intactId="EBI-8070286">
        <id>O43561-2</id>
        <label>LAT</label>
    </interactant>
    <organismsDiffer>false</organismsDiffer>
    <experiments>3</experiments>
</comment>
<comment type="interaction">
    <interactant intactId="EBI-18268016">
        <id>Q86WI0</id>
    </interactant>
    <interactant intactId="EBI-608347">
        <id>Q04941</id>
        <label>PLP2</label>
    </interactant>
    <organismsDiffer>false</organismsDiffer>
    <experiments>3</experiments>
</comment>
<comment type="interaction">
    <interactant intactId="EBI-18268016">
        <id>Q86WI0</id>
    </interactant>
    <interactant intactId="EBI-1058865">
        <id>O75396</id>
        <label>SEC22B</label>
    </interactant>
    <organismsDiffer>false</organismsDiffer>
    <experiments>3</experiments>
</comment>
<comment type="interaction">
    <interactant intactId="EBI-18268016">
        <id>Q86WI0</id>
    </interactant>
    <interactant intactId="EBI-310962">
        <id>Q9UPZ6</id>
        <label>THSD7A</label>
    </interactant>
    <organismsDiffer>false</organismsDiffer>
    <experiments>3</experiments>
</comment>
<comment type="subcellular location">
    <subcellularLocation>
        <location evidence="4">Membrane</location>
        <topology evidence="4">Multi-pass membrane protein</topology>
    </subcellularLocation>
</comment>
<comment type="alternative products">
    <event type="alternative splicing"/>
    <isoform>
        <id>Q86WI0-1</id>
        <name>1</name>
        <sequence type="displayed"/>
    </isoform>
    <isoform>
        <id>Q86WI0-2</id>
        <name>2</name>
        <sequence type="described" ref="VSP_019617"/>
    </isoform>
    <isoform>
        <id>Q86WI0-3</id>
        <name>3</name>
        <sequence type="described" ref="VSP_019616"/>
    </isoform>
</comment>
<comment type="tissue specificity">
    <text evidence="2">Widely expressed. Expressed at high levels in lung, thymus, skeletal muscle, colon and ovary.</text>
</comment>
<comment type="similarity">
    <text evidence="4">Belongs to the LHFP family.</text>
</comment>
<comment type="sequence caution" evidence="4">
    <conflict type="erroneous initiation">
        <sequence resource="EMBL-CDS" id="AAQ88575"/>
    </conflict>
</comment>
<protein>
    <recommendedName>
        <fullName evidence="5">LHFPL tetraspan subfamily member 1 protein</fullName>
    </recommendedName>
    <alternativeName>
        <fullName evidence="5">Lipoma HMGIC fusion partner-like 1 protein</fullName>
    </alternativeName>
</protein>
<organism>
    <name type="scientific">Homo sapiens</name>
    <name type="common">Human</name>
    <dbReference type="NCBI Taxonomy" id="9606"/>
    <lineage>
        <taxon>Eukaryota</taxon>
        <taxon>Metazoa</taxon>
        <taxon>Chordata</taxon>
        <taxon>Craniata</taxon>
        <taxon>Vertebrata</taxon>
        <taxon>Euteleostomi</taxon>
        <taxon>Mammalia</taxon>
        <taxon>Eutheria</taxon>
        <taxon>Euarchontoglires</taxon>
        <taxon>Primates</taxon>
        <taxon>Haplorrhini</taxon>
        <taxon>Catarrhini</taxon>
        <taxon>Hominidae</taxon>
        <taxon>Homo</taxon>
    </lineage>
</organism>
<sequence>MRSSLTMVGTLWAFLSLVTAVTSSTSYFLPYWLFGSQMGKPVSFSTFRRCNYPVRGEGHSLIMVEECGRYASFNAIPSLAWQMCTVVTGAGCALLLLVALAAVLGCCMEELISRMMGRCMGAAQFVGGLLISSGCALYPLGWNSPEIMQTCGNVSNQFQLGTCRLGWAYYCAGGGAAAAMLICTWLSCFAGRNPKPVILVESIMRNTNSYAMELDHCLKP</sequence>
<keyword id="KW-0025">Alternative splicing</keyword>
<keyword id="KW-0325">Glycoprotein</keyword>
<keyword id="KW-0472">Membrane</keyword>
<keyword id="KW-1267">Proteomics identification</keyword>
<keyword id="KW-1185">Reference proteome</keyword>
<keyword id="KW-0732">Signal</keyword>
<keyword id="KW-0812">Transmembrane</keyword>
<keyword id="KW-1133">Transmembrane helix</keyword>
<dbReference type="EMBL" id="AY217350">
    <property type="protein sequence ID" value="AAO60107.1"/>
    <property type="molecule type" value="mRNA"/>
</dbReference>
<dbReference type="EMBL" id="AY358208">
    <property type="protein sequence ID" value="AAQ88575.1"/>
    <property type="status" value="ALT_INIT"/>
    <property type="molecule type" value="mRNA"/>
</dbReference>
<dbReference type="EMBL" id="AK289946">
    <property type="protein sequence ID" value="BAF82635.1"/>
    <property type="molecule type" value="mRNA"/>
</dbReference>
<dbReference type="EMBL" id="BC100785">
    <property type="protein sequence ID" value="AAI00786.1"/>
    <property type="molecule type" value="mRNA"/>
</dbReference>
<dbReference type="EMBL" id="BC100786">
    <property type="protein sequence ID" value="AAI00787.1"/>
    <property type="molecule type" value="mRNA"/>
</dbReference>
<dbReference type="EMBL" id="BC100787">
    <property type="protein sequence ID" value="AAI00788.1"/>
    <property type="molecule type" value="mRNA"/>
</dbReference>
<dbReference type="CCDS" id="CCDS14562.1">
    <molecule id="Q86WI0-1"/>
</dbReference>
<dbReference type="RefSeq" id="NP_835469.1">
    <molecule id="Q86WI0-1"/>
    <property type="nucleotide sequence ID" value="NM_178175.4"/>
</dbReference>
<dbReference type="RefSeq" id="XP_011529245.1">
    <property type="nucleotide sequence ID" value="XM_011530943.2"/>
</dbReference>
<dbReference type="RefSeq" id="XP_011529246.1">
    <property type="nucleotide sequence ID" value="XM_011530944.2"/>
</dbReference>
<dbReference type="RefSeq" id="XP_011529248.1">
    <molecule id="Q86WI0-2"/>
    <property type="nucleotide sequence ID" value="XM_011530946.3"/>
</dbReference>
<dbReference type="RefSeq" id="XP_016884974.1">
    <property type="nucleotide sequence ID" value="XM_017029485.1"/>
</dbReference>
<dbReference type="RefSeq" id="XP_054182969.1">
    <molecule id="Q86WI0-2"/>
    <property type="nucleotide sequence ID" value="XM_054326994.1"/>
</dbReference>
<dbReference type="SMR" id="Q86WI0"/>
<dbReference type="BioGRID" id="131083">
    <property type="interactions" value="16"/>
</dbReference>
<dbReference type="FunCoup" id="Q86WI0">
    <property type="interactions" value="67"/>
</dbReference>
<dbReference type="IntAct" id="Q86WI0">
    <property type="interactions" value="12"/>
</dbReference>
<dbReference type="STRING" id="9606.ENSP00000361036"/>
<dbReference type="GlyCosmos" id="Q86WI0">
    <property type="glycosylation" value="1 site, No reported glycans"/>
</dbReference>
<dbReference type="GlyGen" id="Q86WI0">
    <property type="glycosylation" value="1 site"/>
</dbReference>
<dbReference type="BioMuta" id="LHFPL1"/>
<dbReference type="DMDM" id="74714099"/>
<dbReference type="PaxDb" id="9606-ENSP00000361036"/>
<dbReference type="PeptideAtlas" id="Q86WI0"/>
<dbReference type="Antibodypedia" id="559">
    <property type="antibodies" value="84 antibodies from 16 providers"/>
</dbReference>
<dbReference type="DNASU" id="340596"/>
<dbReference type="Ensembl" id="ENST00000371968.8">
    <molecule id="Q86WI0-1"/>
    <property type="protein sequence ID" value="ENSP00000361036.3"/>
    <property type="gene ID" value="ENSG00000182508.14"/>
</dbReference>
<dbReference type="GeneID" id="340596"/>
<dbReference type="KEGG" id="hsa:340596"/>
<dbReference type="MANE-Select" id="ENST00000371968.8">
    <property type="protein sequence ID" value="ENSP00000361036.3"/>
    <property type="RefSeq nucleotide sequence ID" value="NM_178175.4"/>
    <property type="RefSeq protein sequence ID" value="NP_835469.1"/>
</dbReference>
<dbReference type="UCSC" id="uc004epq.4">
    <molecule id="Q86WI0-1"/>
    <property type="organism name" value="human"/>
</dbReference>
<dbReference type="AGR" id="HGNC:6587"/>
<dbReference type="CTD" id="340596"/>
<dbReference type="GeneCards" id="LHFPL1"/>
<dbReference type="HGNC" id="HGNC:6587">
    <property type="gene designation" value="LHFPL1"/>
</dbReference>
<dbReference type="HPA" id="ENSG00000182508">
    <property type="expression patterns" value="Tissue enhanced (brain, salivary gland)"/>
</dbReference>
<dbReference type="MIM" id="300566">
    <property type="type" value="gene"/>
</dbReference>
<dbReference type="neXtProt" id="NX_Q86WI0"/>
<dbReference type="OpenTargets" id="ENSG00000182508"/>
<dbReference type="PharmGKB" id="PA30359"/>
<dbReference type="VEuPathDB" id="HostDB:ENSG00000182508"/>
<dbReference type="eggNOG" id="KOG4026">
    <property type="taxonomic scope" value="Eukaryota"/>
</dbReference>
<dbReference type="GeneTree" id="ENSGT00990000203589"/>
<dbReference type="HOGENOM" id="CLU_084868_2_0_1"/>
<dbReference type="InParanoid" id="Q86WI0"/>
<dbReference type="OMA" id="VMQTCGN"/>
<dbReference type="OrthoDB" id="9938692at2759"/>
<dbReference type="PAN-GO" id="Q86WI0">
    <property type="GO annotations" value="1 GO annotation based on evolutionary models"/>
</dbReference>
<dbReference type="PhylomeDB" id="Q86WI0"/>
<dbReference type="TreeFam" id="TF321143"/>
<dbReference type="PathwayCommons" id="Q86WI0"/>
<dbReference type="SignaLink" id="Q86WI0"/>
<dbReference type="BioGRID-ORCS" id="340596">
    <property type="hits" value="12 hits in 765 CRISPR screens"/>
</dbReference>
<dbReference type="ChiTaRS" id="LHFPL1">
    <property type="organism name" value="human"/>
</dbReference>
<dbReference type="GeneWiki" id="LHFPL1"/>
<dbReference type="GenomeRNAi" id="340596"/>
<dbReference type="Pharos" id="Q86WI0">
    <property type="development level" value="Tdark"/>
</dbReference>
<dbReference type="PRO" id="PR:Q86WI0"/>
<dbReference type="Proteomes" id="UP000005640">
    <property type="component" value="Chromosome X"/>
</dbReference>
<dbReference type="RNAct" id="Q86WI0">
    <property type="molecule type" value="protein"/>
</dbReference>
<dbReference type="Bgee" id="ENSG00000182508">
    <property type="expression patterns" value="Expressed in male germ line stem cell (sensu Vertebrata) in testis and 73 other cell types or tissues"/>
</dbReference>
<dbReference type="GO" id="GO:0016020">
    <property type="term" value="C:membrane"/>
    <property type="evidence" value="ECO:0000318"/>
    <property type="project" value="GO_Central"/>
</dbReference>
<dbReference type="InterPro" id="IPR019372">
    <property type="entry name" value="LHFPL"/>
</dbReference>
<dbReference type="PANTHER" id="PTHR12489:SF15">
    <property type="entry name" value="LHFPL TETRASPAN SUBFAMILY MEMBER 1 PROTEIN"/>
    <property type="match status" value="1"/>
</dbReference>
<dbReference type="PANTHER" id="PTHR12489">
    <property type="entry name" value="LIPOMA HMGIC FUSION PARTNER-LIKE PROTEIN"/>
    <property type="match status" value="1"/>
</dbReference>
<dbReference type="Pfam" id="PF10242">
    <property type="entry name" value="L_HMGIC_fpl"/>
    <property type="match status" value="1"/>
</dbReference>
<gene>
    <name evidence="5" type="primary">LHFPL1</name>
    <name type="ORF">UNQ5824/PRO19643</name>
</gene>
<reference key="1">
    <citation type="journal article" date="2004" name="DNA Seq.">
        <title>Isolation, tissue distribution and prokaryotic expression of a novel human X-linked gene LHFPL1.</title>
        <authorList>
            <person name="Huang C."/>
            <person name="Guo J."/>
            <person name="Liu S."/>
            <person name="Shan Y."/>
            <person name="Wu S."/>
            <person name="Cai Y."/>
            <person name="Yu L."/>
        </authorList>
    </citation>
    <scope>NUCLEOTIDE SEQUENCE [MRNA] (ISOFORM 1)</scope>
    <scope>TISSUE SPECIFICITY</scope>
    <source>
        <tissue>Brain</tissue>
    </source>
</reference>
<reference key="2">
    <citation type="journal article" date="2003" name="Genome Res.">
        <title>The secreted protein discovery initiative (SPDI), a large-scale effort to identify novel human secreted and transmembrane proteins: a bioinformatics assessment.</title>
        <authorList>
            <person name="Clark H.F."/>
            <person name="Gurney A.L."/>
            <person name="Abaya E."/>
            <person name="Baker K."/>
            <person name="Baldwin D.T."/>
            <person name="Brush J."/>
            <person name="Chen J."/>
            <person name="Chow B."/>
            <person name="Chui C."/>
            <person name="Crowley C."/>
            <person name="Currell B."/>
            <person name="Deuel B."/>
            <person name="Dowd P."/>
            <person name="Eaton D."/>
            <person name="Foster J.S."/>
            <person name="Grimaldi C."/>
            <person name="Gu Q."/>
            <person name="Hass P.E."/>
            <person name="Heldens S."/>
            <person name="Huang A."/>
            <person name="Kim H.S."/>
            <person name="Klimowski L."/>
            <person name="Jin Y."/>
            <person name="Johnson S."/>
            <person name="Lee J."/>
            <person name="Lewis L."/>
            <person name="Liao D."/>
            <person name="Mark M.R."/>
            <person name="Robbie E."/>
            <person name="Sanchez C."/>
            <person name="Schoenfeld J."/>
            <person name="Seshagiri S."/>
            <person name="Simmons L."/>
            <person name="Singh J."/>
            <person name="Smith V."/>
            <person name="Stinson J."/>
            <person name="Vagts A."/>
            <person name="Vandlen R.L."/>
            <person name="Watanabe C."/>
            <person name="Wieand D."/>
            <person name="Woods K."/>
            <person name="Xie M.-H."/>
            <person name="Yansura D.G."/>
            <person name="Yi S."/>
            <person name="Yu G."/>
            <person name="Yuan J."/>
            <person name="Zhang M."/>
            <person name="Zhang Z."/>
            <person name="Goddard A.D."/>
            <person name="Wood W.I."/>
            <person name="Godowski P.J."/>
            <person name="Gray A.M."/>
        </authorList>
    </citation>
    <scope>NUCLEOTIDE SEQUENCE [LARGE SCALE MRNA] (ISOFORM 1)</scope>
</reference>
<reference key="3">
    <citation type="journal article" date="2004" name="Nat. Genet.">
        <title>Complete sequencing and characterization of 21,243 full-length human cDNAs.</title>
        <authorList>
            <person name="Ota T."/>
            <person name="Suzuki Y."/>
            <person name="Nishikawa T."/>
            <person name="Otsuki T."/>
            <person name="Sugiyama T."/>
            <person name="Irie R."/>
            <person name="Wakamatsu A."/>
            <person name="Hayashi K."/>
            <person name="Sato H."/>
            <person name="Nagai K."/>
            <person name="Kimura K."/>
            <person name="Makita H."/>
            <person name="Sekine M."/>
            <person name="Obayashi M."/>
            <person name="Nishi T."/>
            <person name="Shibahara T."/>
            <person name="Tanaka T."/>
            <person name="Ishii S."/>
            <person name="Yamamoto J."/>
            <person name="Saito K."/>
            <person name="Kawai Y."/>
            <person name="Isono Y."/>
            <person name="Nakamura Y."/>
            <person name="Nagahari K."/>
            <person name="Murakami K."/>
            <person name="Yasuda T."/>
            <person name="Iwayanagi T."/>
            <person name="Wagatsuma M."/>
            <person name="Shiratori A."/>
            <person name="Sudo H."/>
            <person name="Hosoiri T."/>
            <person name="Kaku Y."/>
            <person name="Kodaira H."/>
            <person name="Kondo H."/>
            <person name="Sugawara M."/>
            <person name="Takahashi M."/>
            <person name="Kanda K."/>
            <person name="Yokoi T."/>
            <person name="Furuya T."/>
            <person name="Kikkawa E."/>
            <person name="Omura Y."/>
            <person name="Abe K."/>
            <person name="Kamihara K."/>
            <person name="Katsuta N."/>
            <person name="Sato K."/>
            <person name="Tanikawa M."/>
            <person name="Yamazaki M."/>
            <person name="Ninomiya K."/>
            <person name="Ishibashi T."/>
            <person name="Yamashita H."/>
            <person name="Murakawa K."/>
            <person name="Fujimori K."/>
            <person name="Tanai H."/>
            <person name="Kimata M."/>
            <person name="Watanabe M."/>
            <person name="Hiraoka S."/>
            <person name="Chiba Y."/>
            <person name="Ishida S."/>
            <person name="Ono Y."/>
            <person name="Takiguchi S."/>
            <person name="Watanabe S."/>
            <person name="Yosida M."/>
            <person name="Hotuta T."/>
            <person name="Kusano J."/>
            <person name="Kanehori K."/>
            <person name="Takahashi-Fujii A."/>
            <person name="Hara H."/>
            <person name="Tanase T.-O."/>
            <person name="Nomura Y."/>
            <person name="Togiya S."/>
            <person name="Komai F."/>
            <person name="Hara R."/>
            <person name="Takeuchi K."/>
            <person name="Arita M."/>
            <person name="Imose N."/>
            <person name="Musashino K."/>
            <person name="Yuuki H."/>
            <person name="Oshima A."/>
            <person name="Sasaki N."/>
            <person name="Aotsuka S."/>
            <person name="Yoshikawa Y."/>
            <person name="Matsunawa H."/>
            <person name="Ichihara T."/>
            <person name="Shiohata N."/>
            <person name="Sano S."/>
            <person name="Moriya S."/>
            <person name="Momiyama H."/>
            <person name="Satoh N."/>
            <person name="Takami S."/>
            <person name="Terashima Y."/>
            <person name="Suzuki O."/>
            <person name="Nakagawa S."/>
            <person name="Senoh A."/>
            <person name="Mizoguchi H."/>
            <person name="Goto Y."/>
            <person name="Shimizu F."/>
            <person name="Wakebe H."/>
            <person name="Hishigaki H."/>
            <person name="Watanabe T."/>
            <person name="Sugiyama A."/>
            <person name="Takemoto M."/>
            <person name="Kawakami B."/>
            <person name="Yamazaki M."/>
            <person name="Watanabe K."/>
            <person name="Kumagai A."/>
            <person name="Itakura S."/>
            <person name="Fukuzumi Y."/>
            <person name="Fujimori Y."/>
            <person name="Komiyama M."/>
            <person name="Tashiro H."/>
            <person name="Tanigami A."/>
            <person name="Fujiwara T."/>
            <person name="Ono T."/>
            <person name="Yamada K."/>
            <person name="Fujii Y."/>
            <person name="Ozaki K."/>
            <person name="Hirao M."/>
            <person name="Ohmori Y."/>
            <person name="Kawabata A."/>
            <person name="Hikiji T."/>
            <person name="Kobatake N."/>
            <person name="Inagaki H."/>
            <person name="Ikema Y."/>
            <person name="Okamoto S."/>
            <person name="Okitani R."/>
            <person name="Kawakami T."/>
            <person name="Noguchi S."/>
            <person name="Itoh T."/>
            <person name="Shigeta K."/>
            <person name="Senba T."/>
            <person name="Matsumura K."/>
            <person name="Nakajima Y."/>
            <person name="Mizuno T."/>
            <person name="Morinaga M."/>
            <person name="Sasaki M."/>
            <person name="Togashi T."/>
            <person name="Oyama M."/>
            <person name="Hata H."/>
            <person name="Watanabe M."/>
            <person name="Komatsu T."/>
            <person name="Mizushima-Sugano J."/>
            <person name="Satoh T."/>
            <person name="Shirai Y."/>
            <person name="Takahashi Y."/>
            <person name="Nakagawa K."/>
            <person name="Okumura K."/>
            <person name="Nagase T."/>
            <person name="Nomura N."/>
            <person name="Kikuchi H."/>
            <person name="Masuho Y."/>
            <person name="Yamashita R."/>
            <person name="Nakai K."/>
            <person name="Yada T."/>
            <person name="Nakamura Y."/>
            <person name="Ohara O."/>
            <person name="Isogai T."/>
            <person name="Sugano S."/>
        </authorList>
    </citation>
    <scope>NUCLEOTIDE SEQUENCE [LARGE SCALE MRNA] (ISOFORM 1)</scope>
    <source>
        <tissue>Hippocampus</tissue>
    </source>
</reference>
<reference key="4">
    <citation type="journal article" date="2004" name="Genome Res.">
        <title>The status, quality, and expansion of the NIH full-length cDNA project: the Mammalian Gene Collection (MGC).</title>
        <authorList>
            <consortium name="The MGC Project Team"/>
        </authorList>
    </citation>
    <scope>NUCLEOTIDE SEQUENCE [LARGE SCALE MRNA] (ISOFORMS 1; 2 AND 3)</scope>
</reference>
<name>LHPL1_HUMAN</name>
<proteinExistence type="evidence at protein level"/>
<evidence type="ECO:0000255" key="1"/>
<evidence type="ECO:0000269" key="2">
    <source>
    </source>
</evidence>
<evidence type="ECO:0000303" key="3">
    <source>
    </source>
</evidence>
<evidence type="ECO:0000305" key="4"/>
<evidence type="ECO:0000312" key="5">
    <source>
        <dbReference type="HGNC" id="HGNC:6587"/>
    </source>
</evidence>
<accession>Q86WI0</accession>
<accession>A8K1N1</accession>
<accession>Q496M9</accession>
<accession>Q496N0</accession>
<accession>Q6UXU2</accession>